<gene>
    <name evidence="1" type="primary">ung</name>
    <name type="ordered locus">Amet_4255</name>
</gene>
<proteinExistence type="inferred from homology"/>
<sequence>MSVLHNDWAPIVEEEYEKTYYLKLKQFLMEEYRTKTVYPDEGDIFNALQLTPFGKVKAVILGQDPYHGPGQAHGLSFSVKPGVKTPPSLKNIFKELNGDLGYDIPEHGYLNQWAQEGVLMLNTVLTVRRGEPNSHKGAGWEQFTDQIIKRLNERETAMVFILWGKNAQEKEALITNPQHHIIKSPHPSPFSAHRGFFGSHPFSKTNDFLRGVGIEEINWNIEKSSDL</sequence>
<feature type="chain" id="PRO_1000058122" description="Uracil-DNA glycosylase">
    <location>
        <begin position="1"/>
        <end position="227"/>
    </location>
</feature>
<feature type="active site" description="Proton acceptor" evidence="1">
    <location>
        <position position="64"/>
    </location>
</feature>
<dbReference type="EC" id="3.2.2.27" evidence="1"/>
<dbReference type="EMBL" id="CP000724">
    <property type="protein sequence ID" value="ABR50333.1"/>
    <property type="molecule type" value="Genomic_DNA"/>
</dbReference>
<dbReference type="RefSeq" id="WP_012065281.1">
    <property type="nucleotide sequence ID" value="NC_009633.1"/>
</dbReference>
<dbReference type="SMR" id="A6TVW5"/>
<dbReference type="STRING" id="293826.Amet_4255"/>
<dbReference type="KEGG" id="amt:Amet_4255"/>
<dbReference type="eggNOG" id="COG0692">
    <property type="taxonomic scope" value="Bacteria"/>
</dbReference>
<dbReference type="HOGENOM" id="CLU_032162_3_0_9"/>
<dbReference type="OrthoDB" id="9804372at2"/>
<dbReference type="Proteomes" id="UP000001572">
    <property type="component" value="Chromosome"/>
</dbReference>
<dbReference type="GO" id="GO:0005737">
    <property type="term" value="C:cytoplasm"/>
    <property type="evidence" value="ECO:0007669"/>
    <property type="project" value="UniProtKB-SubCell"/>
</dbReference>
<dbReference type="GO" id="GO:0004844">
    <property type="term" value="F:uracil DNA N-glycosylase activity"/>
    <property type="evidence" value="ECO:0007669"/>
    <property type="project" value="UniProtKB-UniRule"/>
</dbReference>
<dbReference type="GO" id="GO:0097510">
    <property type="term" value="P:base-excision repair, AP site formation via deaminated base removal"/>
    <property type="evidence" value="ECO:0007669"/>
    <property type="project" value="TreeGrafter"/>
</dbReference>
<dbReference type="CDD" id="cd10027">
    <property type="entry name" value="UDG-F1-like"/>
    <property type="match status" value="1"/>
</dbReference>
<dbReference type="FunFam" id="3.40.470.10:FF:000001">
    <property type="entry name" value="Uracil-DNA glycosylase"/>
    <property type="match status" value="1"/>
</dbReference>
<dbReference type="Gene3D" id="3.40.470.10">
    <property type="entry name" value="Uracil-DNA glycosylase-like domain"/>
    <property type="match status" value="1"/>
</dbReference>
<dbReference type="HAMAP" id="MF_00148">
    <property type="entry name" value="UDG"/>
    <property type="match status" value="1"/>
</dbReference>
<dbReference type="InterPro" id="IPR002043">
    <property type="entry name" value="UDG_fam1"/>
</dbReference>
<dbReference type="InterPro" id="IPR018085">
    <property type="entry name" value="Ura-DNA_Glyclase_AS"/>
</dbReference>
<dbReference type="InterPro" id="IPR005122">
    <property type="entry name" value="Uracil-DNA_glycosylase-like"/>
</dbReference>
<dbReference type="InterPro" id="IPR036895">
    <property type="entry name" value="Uracil-DNA_glycosylase-like_sf"/>
</dbReference>
<dbReference type="NCBIfam" id="NF003588">
    <property type="entry name" value="PRK05254.1-1"/>
    <property type="match status" value="1"/>
</dbReference>
<dbReference type="NCBIfam" id="NF003589">
    <property type="entry name" value="PRK05254.1-2"/>
    <property type="match status" value="1"/>
</dbReference>
<dbReference type="NCBIfam" id="NF003591">
    <property type="entry name" value="PRK05254.1-4"/>
    <property type="match status" value="1"/>
</dbReference>
<dbReference type="NCBIfam" id="NF003592">
    <property type="entry name" value="PRK05254.1-5"/>
    <property type="match status" value="1"/>
</dbReference>
<dbReference type="NCBIfam" id="TIGR00628">
    <property type="entry name" value="ung"/>
    <property type="match status" value="1"/>
</dbReference>
<dbReference type="PANTHER" id="PTHR11264">
    <property type="entry name" value="URACIL-DNA GLYCOSYLASE"/>
    <property type="match status" value="1"/>
</dbReference>
<dbReference type="PANTHER" id="PTHR11264:SF0">
    <property type="entry name" value="URACIL-DNA GLYCOSYLASE"/>
    <property type="match status" value="1"/>
</dbReference>
<dbReference type="Pfam" id="PF03167">
    <property type="entry name" value="UDG"/>
    <property type="match status" value="1"/>
</dbReference>
<dbReference type="SMART" id="SM00986">
    <property type="entry name" value="UDG"/>
    <property type="match status" value="1"/>
</dbReference>
<dbReference type="SMART" id="SM00987">
    <property type="entry name" value="UreE_C"/>
    <property type="match status" value="1"/>
</dbReference>
<dbReference type="SUPFAM" id="SSF52141">
    <property type="entry name" value="Uracil-DNA glycosylase-like"/>
    <property type="match status" value="1"/>
</dbReference>
<dbReference type="PROSITE" id="PS00130">
    <property type="entry name" value="U_DNA_GLYCOSYLASE"/>
    <property type="match status" value="1"/>
</dbReference>
<protein>
    <recommendedName>
        <fullName evidence="1">Uracil-DNA glycosylase</fullName>
        <shortName evidence="1">UDG</shortName>
        <ecNumber evidence="1">3.2.2.27</ecNumber>
    </recommendedName>
</protein>
<reference key="1">
    <citation type="journal article" date="2016" name="Genome Announc.">
        <title>Complete genome sequence of Alkaliphilus metalliredigens strain QYMF, an alkaliphilic and metal-reducing bacterium isolated from borax-contaminated leachate ponds.</title>
        <authorList>
            <person name="Hwang C."/>
            <person name="Copeland A."/>
            <person name="Lucas S."/>
            <person name="Lapidus A."/>
            <person name="Barry K."/>
            <person name="Detter J.C."/>
            <person name="Glavina Del Rio T."/>
            <person name="Hammon N."/>
            <person name="Israni S."/>
            <person name="Dalin E."/>
            <person name="Tice H."/>
            <person name="Pitluck S."/>
            <person name="Chertkov O."/>
            <person name="Brettin T."/>
            <person name="Bruce D."/>
            <person name="Han C."/>
            <person name="Schmutz J."/>
            <person name="Larimer F."/>
            <person name="Land M.L."/>
            <person name="Hauser L."/>
            <person name="Kyrpides N."/>
            <person name="Mikhailova N."/>
            <person name="Ye Q."/>
            <person name="Zhou J."/>
            <person name="Richardson P."/>
            <person name="Fields M.W."/>
        </authorList>
    </citation>
    <scope>NUCLEOTIDE SEQUENCE [LARGE SCALE GENOMIC DNA]</scope>
    <source>
        <strain>QYMF</strain>
    </source>
</reference>
<evidence type="ECO:0000255" key="1">
    <source>
        <dbReference type="HAMAP-Rule" id="MF_00148"/>
    </source>
</evidence>
<keyword id="KW-0963">Cytoplasm</keyword>
<keyword id="KW-0227">DNA damage</keyword>
<keyword id="KW-0234">DNA repair</keyword>
<keyword id="KW-0378">Hydrolase</keyword>
<keyword id="KW-1185">Reference proteome</keyword>
<accession>A6TVW5</accession>
<name>UNG_ALKMQ</name>
<comment type="function">
    <text evidence="1">Excises uracil residues from the DNA which can arise as a result of misincorporation of dUMP residues by DNA polymerase or due to deamination of cytosine.</text>
</comment>
<comment type="catalytic activity">
    <reaction evidence="1">
        <text>Hydrolyzes single-stranded DNA or mismatched double-stranded DNA and polynucleotides, releasing free uracil.</text>
        <dbReference type="EC" id="3.2.2.27"/>
    </reaction>
</comment>
<comment type="subcellular location">
    <subcellularLocation>
        <location evidence="1">Cytoplasm</location>
    </subcellularLocation>
</comment>
<comment type="similarity">
    <text evidence="1">Belongs to the uracil-DNA glycosylase (UDG) superfamily. UNG family.</text>
</comment>
<organism>
    <name type="scientific">Alkaliphilus metalliredigens (strain QYMF)</name>
    <dbReference type="NCBI Taxonomy" id="293826"/>
    <lineage>
        <taxon>Bacteria</taxon>
        <taxon>Bacillati</taxon>
        <taxon>Bacillota</taxon>
        <taxon>Clostridia</taxon>
        <taxon>Peptostreptococcales</taxon>
        <taxon>Natronincolaceae</taxon>
        <taxon>Alkaliphilus</taxon>
    </lineage>
</organism>